<feature type="signal peptide" evidence="1">
    <location>
        <begin position="1"/>
        <end position="20"/>
    </location>
</feature>
<feature type="chain" id="PRO_5000314249" description="Ecotin">
    <location>
        <begin position="21"/>
        <end position="162"/>
    </location>
</feature>
<feature type="site" description="Reactive bond" evidence="1">
    <location>
        <begin position="104"/>
        <end position="105"/>
    </location>
</feature>
<feature type="disulfide bond" evidence="1">
    <location>
        <begin position="70"/>
        <end position="107"/>
    </location>
</feature>
<dbReference type="EMBL" id="CP000946">
    <property type="protein sequence ID" value="ACA77104.1"/>
    <property type="molecule type" value="Genomic_DNA"/>
</dbReference>
<dbReference type="RefSeq" id="WP_000849209.1">
    <property type="nucleotide sequence ID" value="NZ_CP043852.1"/>
</dbReference>
<dbReference type="SMR" id="B1IY63"/>
<dbReference type="MEROPS" id="I11.001"/>
<dbReference type="KEGG" id="ecl:EcolC_1441"/>
<dbReference type="HOGENOM" id="CLU_111565_0_0_6"/>
<dbReference type="GO" id="GO:0042597">
    <property type="term" value="C:periplasmic space"/>
    <property type="evidence" value="ECO:0007669"/>
    <property type="project" value="UniProtKB-SubCell"/>
</dbReference>
<dbReference type="GO" id="GO:0004867">
    <property type="term" value="F:serine-type endopeptidase inhibitor activity"/>
    <property type="evidence" value="ECO:0007669"/>
    <property type="project" value="UniProtKB-UniRule"/>
</dbReference>
<dbReference type="CDD" id="cd00242">
    <property type="entry name" value="Ecotin"/>
    <property type="match status" value="1"/>
</dbReference>
<dbReference type="FunFam" id="2.60.40.550:FF:000001">
    <property type="entry name" value="Ecotin"/>
    <property type="match status" value="1"/>
</dbReference>
<dbReference type="FunFam" id="4.10.1230.10:FF:000001">
    <property type="entry name" value="Ecotin"/>
    <property type="match status" value="1"/>
</dbReference>
<dbReference type="Gene3D" id="2.60.40.550">
    <property type="entry name" value="Ecotin"/>
    <property type="match status" value="1"/>
</dbReference>
<dbReference type="Gene3D" id="4.10.1230.10">
    <property type="entry name" value="Ecotin, trypsin inhibitor"/>
    <property type="match status" value="1"/>
</dbReference>
<dbReference type="HAMAP" id="MF_00706">
    <property type="entry name" value="Ecotin"/>
    <property type="match status" value="1"/>
</dbReference>
<dbReference type="InterPro" id="IPR027438">
    <property type="entry name" value="Ecotin_C"/>
</dbReference>
<dbReference type="InterPro" id="IPR036198">
    <property type="entry name" value="Ecotin_sf"/>
</dbReference>
<dbReference type="InterPro" id="IPR005658">
    <property type="entry name" value="Prot_inh_ecotin"/>
</dbReference>
<dbReference type="InterPro" id="IPR023084">
    <property type="entry name" value="Prot_inh_ecotin_gammaproteobac"/>
</dbReference>
<dbReference type="NCBIfam" id="NF002987">
    <property type="entry name" value="PRK03719.1"/>
    <property type="match status" value="1"/>
</dbReference>
<dbReference type="PANTHER" id="PTHR35890">
    <property type="match status" value="1"/>
</dbReference>
<dbReference type="PANTHER" id="PTHR35890:SF3">
    <property type="entry name" value="ECOTIN"/>
    <property type="match status" value="1"/>
</dbReference>
<dbReference type="Pfam" id="PF03974">
    <property type="entry name" value="Ecotin"/>
    <property type="match status" value="1"/>
</dbReference>
<dbReference type="PIRSF" id="PIRSF006865">
    <property type="entry name" value="Prot_inh_ecotin"/>
    <property type="match status" value="1"/>
</dbReference>
<dbReference type="SUPFAM" id="SSF49772">
    <property type="entry name" value="Ecotin, trypsin inhibitor"/>
    <property type="match status" value="1"/>
</dbReference>
<organism>
    <name type="scientific">Escherichia coli (strain ATCC 8739 / DSM 1576 / NBRC 3972 / NCIMB 8545 / WDCM 00012 / Crooks)</name>
    <dbReference type="NCBI Taxonomy" id="481805"/>
    <lineage>
        <taxon>Bacteria</taxon>
        <taxon>Pseudomonadati</taxon>
        <taxon>Pseudomonadota</taxon>
        <taxon>Gammaproteobacteria</taxon>
        <taxon>Enterobacterales</taxon>
        <taxon>Enterobacteriaceae</taxon>
        <taxon>Escherichia</taxon>
    </lineage>
</organism>
<gene>
    <name evidence="1" type="primary">eco</name>
    <name type="ordered locus">EcolC_1441</name>
</gene>
<accession>B1IY63</accession>
<reference key="1">
    <citation type="submission" date="2008-02" db="EMBL/GenBank/DDBJ databases">
        <title>Complete sequence of Escherichia coli C str. ATCC 8739.</title>
        <authorList>
            <person name="Copeland A."/>
            <person name="Lucas S."/>
            <person name="Lapidus A."/>
            <person name="Glavina del Rio T."/>
            <person name="Dalin E."/>
            <person name="Tice H."/>
            <person name="Bruce D."/>
            <person name="Goodwin L."/>
            <person name="Pitluck S."/>
            <person name="Kiss H."/>
            <person name="Brettin T."/>
            <person name="Detter J.C."/>
            <person name="Han C."/>
            <person name="Kuske C.R."/>
            <person name="Schmutz J."/>
            <person name="Larimer F."/>
            <person name="Land M."/>
            <person name="Hauser L."/>
            <person name="Kyrpides N."/>
            <person name="Mikhailova N."/>
            <person name="Ingram L."/>
            <person name="Richardson P."/>
        </authorList>
    </citation>
    <scope>NUCLEOTIDE SEQUENCE [LARGE SCALE GENOMIC DNA]</scope>
    <source>
        <strain>ATCC 8739 / DSM 1576 / NBRC 3972 / NCIMB 8545 / WDCM 00012 / Crooks</strain>
    </source>
</reference>
<protein>
    <recommendedName>
        <fullName evidence="1">Ecotin</fullName>
    </recommendedName>
</protein>
<proteinExistence type="inferred from homology"/>
<keyword id="KW-1015">Disulfide bond</keyword>
<keyword id="KW-0574">Periplasm</keyword>
<keyword id="KW-0646">Protease inhibitor</keyword>
<keyword id="KW-0722">Serine protease inhibitor</keyword>
<keyword id="KW-0732">Signal</keyword>
<sequence>MKTILPAVLFAAFATTSAWAAESVQPLEKIAPYPQAEKGMKRQVIQLTPQEDESTLKVELLIGQTLEVDCNLHRLGGKLENKTLEGWGYDYYVFDKVSSPVSTMMACPDGKKEKKFVTAYLGDAGMLRYNSKLPIVVYTPDNVDVKYRVWKAEEKIDNAVVR</sequence>
<name>ECOT_ECOLC</name>
<comment type="function">
    <text evidence="1">General inhibitor of pancreatic serine proteases: inhibits chymotrypsin, trypsin, elastases, factor X, kallikrein as well as a variety of other proteases.</text>
</comment>
<comment type="subunit">
    <text evidence="1">Homodimer.</text>
</comment>
<comment type="subcellular location">
    <subcellularLocation>
        <location evidence="1">Periplasm</location>
    </subcellularLocation>
</comment>
<comment type="similarity">
    <text evidence="1">Belongs to the protease inhibitor I11 (ecotin) family.</text>
</comment>
<evidence type="ECO:0000255" key="1">
    <source>
        <dbReference type="HAMAP-Rule" id="MF_00706"/>
    </source>
</evidence>